<evidence type="ECO:0000255" key="1">
    <source>
        <dbReference type="HAMAP-Rule" id="MF_00283"/>
    </source>
</evidence>
<evidence type="ECO:0000305" key="2"/>
<dbReference type="EC" id="6.1.1.20" evidence="1"/>
<dbReference type="EMBL" id="AL590842">
    <property type="protein sequence ID" value="CAL21055.1"/>
    <property type="molecule type" value="Genomic_DNA"/>
</dbReference>
<dbReference type="EMBL" id="AE009952">
    <property type="protein sequence ID" value="AAM85476.1"/>
    <property type="molecule type" value="Genomic_DNA"/>
</dbReference>
<dbReference type="EMBL" id="AE017042">
    <property type="protein sequence ID" value="AAS62421.1"/>
    <property type="molecule type" value="Genomic_DNA"/>
</dbReference>
<dbReference type="PIR" id="AD0296">
    <property type="entry name" value="AD0296"/>
</dbReference>
<dbReference type="RefSeq" id="WP_002211831.1">
    <property type="nucleotide sequence ID" value="NZ_WUCM01000025.1"/>
</dbReference>
<dbReference type="RefSeq" id="YP_002347391.1">
    <property type="nucleotide sequence ID" value="NC_003143.1"/>
</dbReference>
<dbReference type="SMR" id="Q8ZDX1"/>
<dbReference type="STRING" id="214092.YPO2428"/>
<dbReference type="PaxDb" id="214092-YPO2428"/>
<dbReference type="DNASU" id="1146856"/>
<dbReference type="EnsemblBacteria" id="AAS62421">
    <property type="protein sequence ID" value="AAS62421"/>
    <property type="gene ID" value="YP_2215"/>
</dbReference>
<dbReference type="GeneID" id="57976249"/>
<dbReference type="KEGG" id="ype:YPO2428"/>
<dbReference type="KEGG" id="ypk:y1909"/>
<dbReference type="KEGG" id="ypm:YP_2215"/>
<dbReference type="PATRIC" id="fig|214092.21.peg.2836"/>
<dbReference type="eggNOG" id="COG0072">
    <property type="taxonomic scope" value="Bacteria"/>
</dbReference>
<dbReference type="eggNOG" id="COG0073">
    <property type="taxonomic scope" value="Bacteria"/>
</dbReference>
<dbReference type="HOGENOM" id="CLU_016891_0_0_6"/>
<dbReference type="OMA" id="PSPLWMQ"/>
<dbReference type="OrthoDB" id="9805455at2"/>
<dbReference type="Proteomes" id="UP000000815">
    <property type="component" value="Chromosome"/>
</dbReference>
<dbReference type="Proteomes" id="UP000001019">
    <property type="component" value="Chromosome"/>
</dbReference>
<dbReference type="Proteomes" id="UP000002490">
    <property type="component" value="Chromosome"/>
</dbReference>
<dbReference type="GO" id="GO:0009328">
    <property type="term" value="C:phenylalanine-tRNA ligase complex"/>
    <property type="evidence" value="ECO:0000318"/>
    <property type="project" value="GO_Central"/>
</dbReference>
<dbReference type="GO" id="GO:0005524">
    <property type="term" value="F:ATP binding"/>
    <property type="evidence" value="ECO:0007669"/>
    <property type="project" value="UniProtKB-UniRule"/>
</dbReference>
<dbReference type="GO" id="GO:0000287">
    <property type="term" value="F:magnesium ion binding"/>
    <property type="evidence" value="ECO:0007669"/>
    <property type="project" value="UniProtKB-UniRule"/>
</dbReference>
<dbReference type="GO" id="GO:0004826">
    <property type="term" value="F:phenylalanine-tRNA ligase activity"/>
    <property type="evidence" value="ECO:0007669"/>
    <property type="project" value="UniProtKB-UniRule"/>
</dbReference>
<dbReference type="GO" id="GO:0000049">
    <property type="term" value="F:tRNA binding"/>
    <property type="evidence" value="ECO:0007669"/>
    <property type="project" value="UniProtKB-KW"/>
</dbReference>
<dbReference type="GO" id="GO:0006432">
    <property type="term" value="P:phenylalanyl-tRNA aminoacylation"/>
    <property type="evidence" value="ECO:0000318"/>
    <property type="project" value="GO_Central"/>
</dbReference>
<dbReference type="CDD" id="cd00769">
    <property type="entry name" value="PheRS_beta_core"/>
    <property type="match status" value="1"/>
</dbReference>
<dbReference type="CDD" id="cd02796">
    <property type="entry name" value="tRNA_bind_bactPheRS"/>
    <property type="match status" value="1"/>
</dbReference>
<dbReference type="FunFam" id="2.40.50.140:FF:000045">
    <property type="entry name" value="Phenylalanine--tRNA ligase beta subunit"/>
    <property type="match status" value="1"/>
</dbReference>
<dbReference type="FunFam" id="3.30.56.10:FF:000002">
    <property type="entry name" value="Phenylalanine--tRNA ligase beta subunit"/>
    <property type="match status" value="1"/>
</dbReference>
<dbReference type="FunFam" id="3.30.70.380:FF:000001">
    <property type="entry name" value="Phenylalanine--tRNA ligase beta subunit"/>
    <property type="match status" value="1"/>
</dbReference>
<dbReference type="FunFam" id="3.30.930.10:FF:000022">
    <property type="entry name" value="Phenylalanine--tRNA ligase beta subunit"/>
    <property type="match status" value="1"/>
</dbReference>
<dbReference type="FunFam" id="3.50.40.10:FF:000001">
    <property type="entry name" value="Phenylalanine--tRNA ligase beta subunit"/>
    <property type="match status" value="1"/>
</dbReference>
<dbReference type="Gene3D" id="3.30.56.10">
    <property type="match status" value="2"/>
</dbReference>
<dbReference type="Gene3D" id="3.30.930.10">
    <property type="entry name" value="Bira Bifunctional Protein, Domain 2"/>
    <property type="match status" value="1"/>
</dbReference>
<dbReference type="Gene3D" id="3.30.70.380">
    <property type="entry name" value="Ferrodoxin-fold anticodon-binding domain"/>
    <property type="match status" value="1"/>
</dbReference>
<dbReference type="Gene3D" id="2.40.50.140">
    <property type="entry name" value="Nucleic acid-binding proteins"/>
    <property type="match status" value="1"/>
</dbReference>
<dbReference type="Gene3D" id="3.50.40.10">
    <property type="entry name" value="Phenylalanyl-trna Synthetase, Chain B, domain 3"/>
    <property type="match status" value="1"/>
</dbReference>
<dbReference type="HAMAP" id="MF_00283">
    <property type="entry name" value="Phe_tRNA_synth_beta1"/>
    <property type="match status" value="1"/>
</dbReference>
<dbReference type="InterPro" id="IPR045864">
    <property type="entry name" value="aa-tRNA-synth_II/BPL/LPL"/>
</dbReference>
<dbReference type="InterPro" id="IPR005146">
    <property type="entry name" value="B3/B4_tRNA-bd"/>
</dbReference>
<dbReference type="InterPro" id="IPR009061">
    <property type="entry name" value="DNA-bd_dom_put_sf"/>
</dbReference>
<dbReference type="InterPro" id="IPR005121">
    <property type="entry name" value="Fdx_antiC-bd"/>
</dbReference>
<dbReference type="InterPro" id="IPR036690">
    <property type="entry name" value="Fdx_antiC-bd_sf"/>
</dbReference>
<dbReference type="InterPro" id="IPR012340">
    <property type="entry name" value="NA-bd_OB-fold"/>
</dbReference>
<dbReference type="InterPro" id="IPR045060">
    <property type="entry name" value="Phe-tRNA-ligase_IIc_bsu"/>
</dbReference>
<dbReference type="InterPro" id="IPR004532">
    <property type="entry name" value="Phe-tRNA-ligase_IIc_bsu_bact"/>
</dbReference>
<dbReference type="InterPro" id="IPR020825">
    <property type="entry name" value="Phe-tRNA_synthase-like_B3/B4"/>
</dbReference>
<dbReference type="InterPro" id="IPR041616">
    <property type="entry name" value="PheRS_beta_core"/>
</dbReference>
<dbReference type="InterPro" id="IPR002547">
    <property type="entry name" value="tRNA-bd_dom"/>
</dbReference>
<dbReference type="InterPro" id="IPR033714">
    <property type="entry name" value="tRNA_bind_bactPheRS"/>
</dbReference>
<dbReference type="InterPro" id="IPR005147">
    <property type="entry name" value="tRNA_synthase_B5-dom"/>
</dbReference>
<dbReference type="NCBIfam" id="TIGR00472">
    <property type="entry name" value="pheT_bact"/>
    <property type="match status" value="1"/>
</dbReference>
<dbReference type="NCBIfam" id="NF045760">
    <property type="entry name" value="YtpR"/>
    <property type="match status" value="1"/>
</dbReference>
<dbReference type="PANTHER" id="PTHR10947:SF0">
    <property type="entry name" value="PHENYLALANINE--TRNA LIGASE BETA SUBUNIT"/>
    <property type="match status" value="1"/>
</dbReference>
<dbReference type="PANTHER" id="PTHR10947">
    <property type="entry name" value="PHENYLALANYL-TRNA SYNTHETASE BETA CHAIN AND LEUCINE-RICH REPEAT-CONTAINING PROTEIN 47"/>
    <property type="match status" value="1"/>
</dbReference>
<dbReference type="Pfam" id="PF03483">
    <property type="entry name" value="B3_4"/>
    <property type="match status" value="1"/>
</dbReference>
<dbReference type="Pfam" id="PF03484">
    <property type="entry name" value="B5"/>
    <property type="match status" value="1"/>
</dbReference>
<dbReference type="Pfam" id="PF03147">
    <property type="entry name" value="FDX-ACB"/>
    <property type="match status" value="1"/>
</dbReference>
<dbReference type="Pfam" id="PF01588">
    <property type="entry name" value="tRNA_bind"/>
    <property type="match status" value="1"/>
</dbReference>
<dbReference type="Pfam" id="PF17759">
    <property type="entry name" value="tRNA_synthFbeta"/>
    <property type="match status" value="1"/>
</dbReference>
<dbReference type="SMART" id="SM00873">
    <property type="entry name" value="B3_4"/>
    <property type="match status" value="1"/>
</dbReference>
<dbReference type="SMART" id="SM00874">
    <property type="entry name" value="B5"/>
    <property type="match status" value="1"/>
</dbReference>
<dbReference type="SMART" id="SM00896">
    <property type="entry name" value="FDX-ACB"/>
    <property type="match status" value="1"/>
</dbReference>
<dbReference type="SUPFAM" id="SSF54991">
    <property type="entry name" value="Anticodon-binding domain of PheRS"/>
    <property type="match status" value="1"/>
</dbReference>
<dbReference type="SUPFAM" id="SSF55681">
    <property type="entry name" value="Class II aaRS and biotin synthetases"/>
    <property type="match status" value="1"/>
</dbReference>
<dbReference type="SUPFAM" id="SSF50249">
    <property type="entry name" value="Nucleic acid-binding proteins"/>
    <property type="match status" value="1"/>
</dbReference>
<dbReference type="SUPFAM" id="SSF56037">
    <property type="entry name" value="PheT/TilS domain"/>
    <property type="match status" value="1"/>
</dbReference>
<dbReference type="SUPFAM" id="SSF46955">
    <property type="entry name" value="Putative DNA-binding domain"/>
    <property type="match status" value="1"/>
</dbReference>
<dbReference type="PROSITE" id="PS51483">
    <property type="entry name" value="B5"/>
    <property type="match status" value="1"/>
</dbReference>
<dbReference type="PROSITE" id="PS51447">
    <property type="entry name" value="FDX_ACB"/>
    <property type="match status" value="1"/>
</dbReference>
<dbReference type="PROSITE" id="PS50886">
    <property type="entry name" value="TRBD"/>
    <property type="match status" value="1"/>
</dbReference>
<proteinExistence type="inferred from homology"/>
<accession>Q8ZDX1</accession>
<accession>Q0WE97</accession>
<comment type="catalytic activity">
    <reaction evidence="1">
        <text>tRNA(Phe) + L-phenylalanine + ATP = L-phenylalanyl-tRNA(Phe) + AMP + diphosphate + H(+)</text>
        <dbReference type="Rhea" id="RHEA:19413"/>
        <dbReference type="Rhea" id="RHEA-COMP:9668"/>
        <dbReference type="Rhea" id="RHEA-COMP:9699"/>
        <dbReference type="ChEBI" id="CHEBI:15378"/>
        <dbReference type="ChEBI" id="CHEBI:30616"/>
        <dbReference type="ChEBI" id="CHEBI:33019"/>
        <dbReference type="ChEBI" id="CHEBI:58095"/>
        <dbReference type="ChEBI" id="CHEBI:78442"/>
        <dbReference type="ChEBI" id="CHEBI:78531"/>
        <dbReference type="ChEBI" id="CHEBI:456215"/>
        <dbReference type="EC" id="6.1.1.20"/>
    </reaction>
</comment>
<comment type="cofactor">
    <cofactor evidence="1">
        <name>Mg(2+)</name>
        <dbReference type="ChEBI" id="CHEBI:18420"/>
    </cofactor>
    <text evidence="1">Binds 2 magnesium ions per tetramer.</text>
</comment>
<comment type="subunit">
    <text evidence="1">Tetramer of two alpha and two beta subunits.</text>
</comment>
<comment type="subcellular location">
    <subcellularLocation>
        <location evidence="1">Cytoplasm</location>
    </subcellularLocation>
</comment>
<comment type="similarity">
    <text evidence="1">Belongs to the phenylalanyl-tRNA synthetase beta subunit family. Type 1 subfamily.</text>
</comment>
<sequence>MKFSELWLREWVNPAISSDDLAHQITMAGLEVDGVDAVAGEFNGVVVGHVVECGQHPNADKLRVTKIDVGGDRLLDIVCGAPNCRQGLKVAVATVGAVLPGDFKIKAAKLRGESSEGMLCSFSELAISDDHDGIIELPADAPIGVDVREYLHLDDKTIEISVTPNRADCLGIIGVARDVAVVNQLPLTEPDMAEVVASINDTLPIRVDAPQACPRYLGRVVKGINVKAATPLWMREKLRRCGIRSIDPVVDVTNFVLLELGQPMHAFDLDRISGGVIVRLATDGEELTLLDGTKAKLNADTLVIADHQKPLAMAGIFGGEHSGVNEETRNVLLESAFFNPLSITGRARRHGLHTDASHRYERGVDPALQHKAIERATRLLIDICGGEAGPVVDVTTASELPKQATITLRREKLDRLIGHHIPSEQVSDILRRLGCKVTECGSDWQAVAPSWRFDMAIEEDLVEEVARIYGYNNIPDVPVRADLVMTKHREASLSLKRVKTALVDRGYQEAITYSFVDPKVQALLHPQQEALILPNPISVDMSAMRLSLLTGLLSAVVYNQNRQQSRLRLFESGLRFVPDNTADLGIRQDVMLAGVIAGHRYDEHWDLARQPIDFYDLKGDLEAILELTGKLSDVQFRAEAHSALHPGQSAAIYLAGEHIGFIGVVHPELERKLDLNGRTVVFEVQWNKLADRAVPQAREISRFPANRRDIAVVVAENVPAEDILAECKKVGANQVVGVNLFDVYSGKGVAEGYKSLAISLVLQDTARTLEEEEIAATVAKCVEALKQRFQASLRD</sequence>
<reference key="1">
    <citation type="journal article" date="2001" name="Nature">
        <title>Genome sequence of Yersinia pestis, the causative agent of plague.</title>
        <authorList>
            <person name="Parkhill J."/>
            <person name="Wren B.W."/>
            <person name="Thomson N.R."/>
            <person name="Titball R.W."/>
            <person name="Holden M.T.G."/>
            <person name="Prentice M.B."/>
            <person name="Sebaihia M."/>
            <person name="James K.D."/>
            <person name="Churcher C.M."/>
            <person name="Mungall K.L."/>
            <person name="Baker S."/>
            <person name="Basham D."/>
            <person name="Bentley S.D."/>
            <person name="Brooks K."/>
            <person name="Cerdeno-Tarraga A.-M."/>
            <person name="Chillingworth T."/>
            <person name="Cronin A."/>
            <person name="Davies R.M."/>
            <person name="Davis P."/>
            <person name="Dougan G."/>
            <person name="Feltwell T."/>
            <person name="Hamlin N."/>
            <person name="Holroyd S."/>
            <person name="Jagels K."/>
            <person name="Karlyshev A.V."/>
            <person name="Leather S."/>
            <person name="Moule S."/>
            <person name="Oyston P.C.F."/>
            <person name="Quail M.A."/>
            <person name="Rutherford K.M."/>
            <person name="Simmonds M."/>
            <person name="Skelton J."/>
            <person name="Stevens K."/>
            <person name="Whitehead S."/>
            <person name="Barrell B.G."/>
        </authorList>
    </citation>
    <scope>NUCLEOTIDE SEQUENCE [LARGE SCALE GENOMIC DNA]</scope>
    <source>
        <strain>CO-92 / Biovar Orientalis</strain>
    </source>
</reference>
<reference key="2">
    <citation type="journal article" date="2002" name="J. Bacteriol.">
        <title>Genome sequence of Yersinia pestis KIM.</title>
        <authorList>
            <person name="Deng W."/>
            <person name="Burland V."/>
            <person name="Plunkett G. III"/>
            <person name="Boutin A."/>
            <person name="Mayhew G.F."/>
            <person name="Liss P."/>
            <person name="Perna N.T."/>
            <person name="Rose D.J."/>
            <person name="Mau B."/>
            <person name="Zhou S."/>
            <person name="Schwartz D.C."/>
            <person name="Fetherston J.D."/>
            <person name="Lindler L.E."/>
            <person name="Brubaker R.R."/>
            <person name="Plano G.V."/>
            <person name="Straley S.C."/>
            <person name="McDonough K.A."/>
            <person name="Nilles M.L."/>
            <person name="Matson J.S."/>
            <person name="Blattner F.R."/>
            <person name="Perry R.D."/>
        </authorList>
    </citation>
    <scope>NUCLEOTIDE SEQUENCE [LARGE SCALE GENOMIC DNA]</scope>
    <source>
        <strain>KIM10+ / Biovar Mediaevalis</strain>
    </source>
</reference>
<reference key="3">
    <citation type="journal article" date="2004" name="DNA Res.">
        <title>Complete genome sequence of Yersinia pestis strain 91001, an isolate avirulent to humans.</title>
        <authorList>
            <person name="Song Y."/>
            <person name="Tong Z."/>
            <person name="Wang J."/>
            <person name="Wang L."/>
            <person name="Guo Z."/>
            <person name="Han Y."/>
            <person name="Zhang J."/>
            <person name="Pei D."/>
            <person name="Zhou D."/>
            <person name="Qin H."/>
            <person name="Pang X."/>
            <person name="Han Y."/>
            <person name="Zhai J."/>
            <person name="Li M."/>
            <person name="Cui B."/>
            <person name="Qi Z."/>
            <person name="Jin L."/>
            <person name="Dai R."/>
            <person name="Chen F."/>
            <person name="Li S."/>
            <person name="Ye C."/>
            <person name="Du Z."/>
            <person name="Lin W."/>
            <person name="Wang J."/>
            <person name="Yu J."/>
            <person name="Yang H."/>
            <person name="Wang J."/>
            <person name="Huang P."/>
            <person name="Yang R."/>
        </authorList>
    </citation>
    <scope>NUCLEOTIDE SEQUENCE [LARGE SCALE GENOMIC DNA]</scope>
    <source>
        <strain>91001 / Biovar Mediaevalis</strain>
    </source>
</reference>
<feature type="chain" id="PRO_0000126993" description="Phenylalanine--tRNA ligase beta subunit">
    <location>
        <begin position="1"/>
        <end position="795"/>
    </location>
</feature>
<feature type="domain" description="tRNA-binding" evidence="1">
    <location>
        <begin position="39"/>
        <end position="148"/>
    </location>
</feature>
<feature type="domain" description="B5" evidence="1">
    <location>
        <begin position="401"/>
        <end position="476"/>
    </location>
</feature>
<feature type="domain" description="FDX-ACB" evidence="1">
    <location>
        <begin position="701"/>
        <end position="794"/>
    </location>
</feature>
<feature type="binding site" evidence="1">
    <location>
        <position position="454"/>
    </location>
    <ligand>
        <name>Mg(2+)</name>
        <dbReference type="ChEBI" id="CHEBI:18420"/>
        <note>shared with alpha subunit</note>
    </ligand>
</feature>
<feature type="binding site" evidence="1">
    <location>
        <position position="460"/>
    </location>
    <ligand>
        <name>Mg(2+)</name>
        <dbReference type="ChEBI" id="CHEBI:18420"/>
        <note>shared with alpha subunit</note>
    </ligand>
</feature>
<feature type="binding site" evidence="1">
    <location>
        <position position="463"/>
    </location>
    <ligand>
        <name>Mg(2+)</name>
        <dbReference type="ChEBI" id="CHEBI:18420"/>
        <note>shared with alpha subunit</note>
    </ligand>
</feature>
<feature type="binding site" evidence="1">
    <location>
        <position position="464"/>
    </location>
    <ligand>
        <name>Mg(2+)</name>
        <dbReference type="ChEBI" id="CHEBI:18420"/>
        <note>shared with alpha subunit</note>
    </ligand>
</feature>
<feature type="sequence conflict" description="In Ref. 3; AAS62421." evidence="2" ref="3">
    <original>R</original>
    <variation>H</variation>
    <location>
        <position position="378"/>
    </location>
</feature>
<gene>
    <name evidence="1" type="primary">pheT</name>
    <name type="ordered locus">YPO2428</name>
    <name type="ordered locus">y1909</name>
    <name type="ordered locus">YP_2215</name>
</gene>
<keyword id="KW-0030">Aminoacyl-tRNA synthetase</keyword>
<keyword id="KW-0067">ATP-binding</keyword>
<keyword id="KW-0963">Cytoplasm</keyword>
<keyword id="KW-0436">Ligase</keyword>
<keyword id="KW-0460">Magnesium</keyword>
<keyword id="KW-0479">Metal-binding</keyword>
<keyword id="KW-0547">Nucleotide-binding</keyword>
<keyword id="KW-0648">Protein biosynthesis</keyword>
<keyword id="KW-1185">Reference proteome</keyword>
<keyword id="KW-0694">RNA-binding</keyword>
<keyword id="KW-0820">tRNA-binding</keyword>
<name>SYFB_YERPE</name>
<organism>
    <name type="scientific">Yersinia pestis</name>
    <dbReference type="NCBI Taxonomy" id="632"/>
    <lineage>
        <taxon>Bacteria</taxon>
        <taxon>Pseudomonadati</taxon>
        <taxon>Pseudomonadota</taxon>
        <taxon>Gammaproteobacteria</taxon>
        <taxon>Enterobacterales</taxon>
        <taxon>Yersiniaceae</taxon>
        <taxon>Yersinia</taxon>
    </lineage>
</organism>
<protein>
    <recommendedName>
        <fullName evidence="1">Phenylalanine--tRNA ligase beta subunit</fullName>
        <ecNumber evidence="1">6.1.1.20</ecNumber>
    </recommendedName>
    <alternativeName>
        <fullName evidence="1">Phenylalanyl-tRNA synthetase beta subunit</fullName>
        <shortName evidence="1">PheRS</shortName>
    </alternativeName>
</protein>